<comment type="similarity">
    <text evidence="1">To E.coli YbdD.</text>
</comment>
<organism>
    <name type="scientific">Escherichia coli O157:H7</name>
    <dbReference type="NCBI Taxonomy" id="83334"/>
    <lineage>
        <taxon>Bacteria</taxon>
        <taxon>Pseudomonadati</taxon>
        <taxon>Pseudomonadota</taxon>
        <taxon>Gammaproteobacteria</taxon>
        <taxon>Enterobacterales</taxon>
        <taxon>Enterobacteriaceae</taxon>
        <taxon>Escherichia</taxon>
    </lineage>
</organism>
<keyword id="KW-1185">Reference proteome</keyword>
<evidence type="ECO:0000305" key="1"/>
<name>YJIX_ECO57</name>
<sequence>MFGNLGQAKKYLGQAAKMLIGIPDYDNYVEHMKTNHPDKPYMSYEEFFRERQNARYGGDGKGGMRCC</sequence>
<protein>
    <recommendedName>
        <fullName>Uncharacterized protein YjiX</fullName>
    </recommendedName>
</protein>
<proteinExistence type="predicted"/>
<accession>P0ADD0</accession>
<accession>P39395</accession>
<reference key="1">
    <citation type="journal article" date="2001" name="Nature">
        <title>Genome sequence of enterohaemorrhagic Escherichia coli O157:H7.</title>
        <authorList>
            <person name="Perna N.T."/>
            <person name="Plunkett G. III"/>
            <person name="Burland V."/>
            <person name="Mau B."/>
            <person name="Glasner J.D."/>
            <person name="Rose D.J."/>
            <person name="Mayhew G.F."/>
            <person name="Evans P.S."/>
            <person name="Gregor J."/>
            <person name="Kirkpatrick H.A."/>
            <person name="Posfai G."/>
            <person name="Hackett J."/>
            <person name="Klink S."/>
            <person name="Boutin A."/>
            <person name="Shao Y."/>
            <person name="Miller L."/>
            <person name="Grotbeck E.J."/>
            <person name="Davis N.W."/>
            <person name="Lim A."/>
            <person name="Dimalanta E.T."/>
            <person name="Potamousis K."/>
            <person name="Apodaca J."/>
            <person name="Anantharaman T.S."/>
            <person name="Lin J."/>
            <person name="Yen G."/>
            <person name="Schwartz D.C."/>
            <person name="Welch R.A."/>
            <person name="Blattner F.R."/>
        </authorList>
    </citation>
    <scope>NUCLEOTIDE SEQUENCE [LARGE SCALE GENOMIC DNA]</scope>
    <source>
        <strain>O157:H7 / EDL933 / ATCC 700927 / EHEC</strain>
    </source>
</reference>
<reference key="2">
    <citation type="journal article" date="2001" name="DNA Res.">
        <title>Complete genome sequence of enterohemorrhagic Escherichia coli O157:H7 and genomic comparison with a laboratory strain K-12.</title>
        <authorList>
            <person name="Hayashi T."/>
            <person name="Makino K."/>
            <person name="Ohnishi M."/>
            <person name="Kurokawa K."/>
            <person name="Ishii K."/>
            <person name="Yokoyama K."/>
            <person name="Han C.-G."/>
            <person name="Ohtsubo E."/>
            <person name="Nakayama K."/>
            <person name="Murata T."/>
            <person name="Tanaka M."/>
            <person name="Tobe T."/>
            <person name="Iida T."/>
            <person name="Takami H."/>
            <person name="Honda T."/>
            <person name="Sasakawa C."/>
            <person name="Ogasawara N."/>
            <person name="Yasunaga T."/>
            <person name="Kuhara S."/>
            <person name="Shiba T."/>
            <person name="Hattori M."/>
            <person name="Shinagawa H."/>
        </authorList>
    </citation>
    <scope>NUCLEOTIDE SEQUENCE [LARGE SCALE GENOMIC DNA]</scope>
    <source>
        <strain>O157:H7 / Sakai / RIMD 0509952 / EHEC</strain>
    </source>
</reference>
<dbReference type="EMBL" id="AE005174">
    <property type="protein sequence ID" value="AAG59535.1"/>
    <property type="molecule type" value="Genomic_DNA"/>
</dbReference>
<dbReference type="EMBL" id="BA000007">
    <property type="protein sequence ID" value="BAB38735.1"/>
    <property type="molecule type" value="Genomic_DNA"/>
</dbReference>
<dbReference type="PIR" id="H91292">
    <property type="entry name" value="H91292"/>
</dbReference>
<dbReference type="RefSeq" id="NP_313339.1">
    <property type="nucleotide sequence ID" value="NC_002695.1"/>
</dbReference>
<dbReference type="RefSeq" id="WP_000467859.1">
    <property type="nucleotide sequence ID" value="NZ_VOAI01000002.1"/>
</dbReference>
<dbReference type="STRING" id="155864.Z5952"/>
<dbReference type="GeneID" id="913597"/>
<dbReference type="KEGG" id="ece:Z5952"/>
<dbReference type="KEGG" id="ecs:ECs_5312"/>
<dbReference type="PATRIC" id="fig|386585.9.peg.5556"/>
<dbReference type="eggNOG" id="COG2879">
    <property type="taxonomic scope" value="Bacteria"/>
</dbReference>
<dbReference type="HOGENOM" id="CLU_171734_1_1_6"/>
<dbReference type="OMA" id="TYVEHMQ"/>
<dbReference type="Proteomes" id="UP000000558">
    <property type="component" value="Chromosome"/>
</dbReference>
<dbReference type="Proteomes" id="UP000002519">
    <property type="component" value="Chromosome"/>
</dbReference>
<dbReference type="InterPro" id="IPR007423">
    <property type="entry name" value="Sel_put"/>
</dbReference>
<dbReference type="PANTHER" id="PTHR38453:SF1">
    <property type="entry name" value="CYTOPLASMIC PROTEIN"/>
    <property type="match status" value="1"/>
</dbReference>
<dbReference type="PANTHER" id="PTHR38453">
    <property type="entry name" value="CYTOPLASMIC PROTEIN-RELATED"/>
    <property type="match status" value="1"/>
</dbReference>
<dbReference type="Pfam" id="PF04328">
    <property type="entry name" value="Sel_put"/>
    <property type="match status" value="1"/>
</dbReference>
<feature type="chain" id="PRO_0000169801" description="Uncharacterized protein YjiX">
    <location>
        <begin position="1"/>
        <end position="67"/>
    </location>
</feature>
<gene>
    <name type="primary">yjiX</name>
    <name type="ordered locus">Z5952</name>
    <name type="ordered locus">ECs5312</name>
</gene>